<feature type="chain" id="PRO_0000268777" description="Glucokinase">
    <location>
        <begin position="1"/>
        <end position="342"/>
    </location>
</feature>
<feature type="binding site" evidence="1">
    <location>
        <begin position="18"/>
        <end position="23"/>
    </location>
    <ligand>
        <name>ATP</name>
        <dbReference type="ChEBI" id="CHEBI:30616"/>
    </ligand>
</feature>
<name>GLK_CHESB</name>
<protein>
    <recommendedName>
        <fullName evidence="1">Glucokinase</fullName>
        <ecNumber evidence="1">2.7.1.2</ecNumber>
    </recommendedName>
    <alternativeName>
        <fullName evidence="1">Glucose kinase</fullName>
    </alternativeName>
</protein>
<comment type="catalytic activity">
    <reaction evidence="1">
        <text>D-glucose + ATP = D-glucose 6-phosphate + ADP + H(+)</text>
        <dbReference type="Rhea" id="RHEA:17825"/>
        <dbReference type="ChEBI" id="CHEBI:4167"/>
        <dbReference type="ChEBI" id="CHEBI:15378"/>
        <dbReference type="ChEBI" id="CHEBI:30616"/>
        <dbReference type="ChEBI" id="CHEBI:61548"/>
        <dbReference type="ChEBI" id="CHEBI:456216"/>
        <dbReference type="EC" id="2.7.1.2"/>
    </reaction>
</comment>
<comment type="subcellular location">
    <subcellularLocation>
        <location evidence="1">Cytoplasm</location>
    </subcellularLocation>
</comment>
<comment type="similarity">
    <text evidence="1">Belongs to the bacterial glucokinase family.</text>
</comment>
<evidence type="ECO:0000255" key="1">
    <source>
        <dbReference type="HAMAP-Rule" id="MF_00524"/>
    </source>
</evidence>
<reference key="1">
    <citation type="submission" date="2006-06" db="EMBL/GenBank/DDBJ databases">
        <title>Complete sequence of chromosome of Mesorhizobium sp. BNC1.</title>
        <authorList>
            <consortium name="US DOE Joint Genome Institute"/>
            <person name="Copeland A."/>
            <person name="Lucas S."/>
            <person name="Lapidus A."/>
            <person name="Barry K."/>
            <person name="Detter J.C."/>
            <person name="Glavina del Rio T."/>
            <person name="Hammon N."/>
            <person name="Israni S."/>
            <person name="Dalin E."/>
            <person name="Tice H."/>
            <person name="Pitluck S."/>
            <person name="Chertkov O."/>
            <person name="Brettin T."/>
            <person name="Bruce D."/>
            <person name="Han C."/>
            <person name="Tapia R."/>
            <person name="Gilna P."/>
            <person name="Schmutz J."/>
            <person name="Larimer F."/>
            <person name="Land M."/>
            <person name="Hauser L."/>
            <person name="Kyrpides N."/>
            <person name="Mikhailova N."/>
            <person name="Richardson P."/>
        </authorList>
    </citation>
    <scope>NUCLEOTIDE SEQUENCE [LARGE SCALE GENOMIC DNA]</scope>
    <source>
        <strain>BNC1</strain>
    </source>
</reference>
<proteinExistence type="inferred from homology"/>
<keyword id="KW-0067">ATP-binding</keyword>
<keyword id="KW-0963">Cytoplasm</keyword>
<keyword id="KW-0324">Glycolysis</keyword>
<keyword id="KW-0418">Kinase</keyword>
<keyword id="KW-0547">Nucleotide-binding</keyword>
<keyword id="KW-0808">Transferase</keyword>
<dbReference type="EC" id="2.7.1.2" evidence="1"/>
<dbReference type="EMBL" id="CP000390">
    <property type="protein sequence ID" value="ABG64963.1"/>
    <property type="molecule type" value="Genomic_DNA"/>
</dbReference>
<dbReference type="SMR" id="Q11CB2"/>
<dbReference type="STRING" id="266779.Meso_3594"/>
<dbReference type="KEGG" id="mes:Meso_3594"/>
<dbReference type="eggNOG" id="COG0837">
    <property type="taxonomic scope" value="Bacteria"/>
</dbReference>
<dbReference type="HOGENOM" id="CLU_042582_1_0_5"/>
<dbReference type="OrthoDB" id="9800595at2"/>
<dbReference type="GO" id="GO:0005829">
    <property type="term" value="C:cytosol"/>
    <property type="evidence" value="ECO:0007669"/>
    <property type="project" value="TreeGrafter"/>
</dbReference>
<dbReference type="GO" id="GO:0005524">
    <property type="term" value="F:ATP binding"/>
    <property type="evidence" value="ECO:0007669"/>
    <property type="project" value="UniProtKB-UniRule"/>
</dbReference>
<dbReference type="GO" id="GO:0005536">
    <property type="term" value="F:D-glucose binding"/>
    <property type="evidence" value="ECO:0007669"/>
    <property type="project" value="InterPro"/>
</dbReference>
<dbReference type="GO" id="GO:0004340">
    <property type="term" value="F:glucokinase activity"/>
    <property type="evidence" value="ECO:0007669"/>
    <property type="project" value="UniProtKB-UniRule"/>
</dbReference>
<dbReference type="GO" id="GO:0006096">
    <property type="term" value="P:glycolytic process"/>
    <property type="evidence" value="ECO:0007669"/>
    <property type="project" value="UniProtKB-UniRule"/>
</dbReference>
<dbReference type="CDD" id="cd24008">
    <property type="entry name" value="ASKHA_NBD_GLK"/>
    <property type="match status" value="1"/>
</dbReference>
<dbReference type="Gene3D" id="3.30.420.40">
    <property type="match status" value="1"/>
</dbReference>
<dbReference type="Gene3D" id="3.40.367.20">
    <property type="match status" value="1"/>
</dbReference>
<dbReference type="HAMAP" id="MF_00524">
    <property type="entry name" value="Glucokinase"/>
    <property type="match status" value="1"/>
</dbReference>
<dbReference type="InterPro" id="IPR043129">
    <property type="entry name" value="ATPase_NBD"/>
</dbReference>
<dbReference type="InterPro" id="IPR050201">
    <property type="entry name" value="Bacterial_glucokinase"/>
</dbReference>
<dbReference type="InterPro" id="IPR003836">
    <property type="entry name" value="Glucokinase"/>
</dbReference>
<dbReference type="NCBIfam" id="TIGR00749">
    <property type="entry name" value="glk"/>
    <property type="match status" value="1"/>
</dbReference>
<dbReference type="NCBIfam" id="NF001417">
    <property type="entry name" value="PRK00292.1-4"/>
    <property type="match status" value="1"/>
</dbReference>
<dbReference type="PANTHER" id="PTHR47690">
    <property type="entry name" value="GLUCOKINASE"/>
    <property type="match status" value="1"/>
</dbReference>
<dbReference type="PANTHER" id="PTHR47690:SF1">
    <property type="entry name" value="GLUCOKINASE"/>
    <property type="match status" value="1"/>
</dbReference>
<dbReference type="Pfam" id="PF02685">
    <property type="entry name" value="Glucokinase"/>
    <property type="match status" value="1"/>
</dbReference>
<dbReference type="SUPFAM" id="SSF53067">
    <property type="entry name" value="Actin-like ATPase domain"/>
    <property type="match status" value="1"/>
</dbReference>
<accession>Q11CB2</accession>
<organism>
    <name type="scientific">Chelativorans sp. (strain BNC1)</name>
    <dbReference type="NCBI Taxonomy" id="266779"/>
    <lineage>
        <taxon>Bacteria</taxon>
        <taxon>Pseudomonadati</taxon>
        <taxon>Pseudomonadota</taxon>
        <taxon>Alphaproteobacteria</taxon>
        <taxon>Hyphomicrobiales</taxon>
        <taxon>Phyllobacteriaceae</taxon>
        <taxon>Chelativorans</taxon>
    </lineage>
</organism>
<gene>
    <name evidence="1" type="primary">glk</name>
    <name type="ordered locus">Meso_3594</name>
</gene>
<sequence length="342" mass="36572">MAYSTDHDVVLDFPILIGDIGGTNARFAIVVDSYAEPREFPVVQTADFATIEDAIQTAILDQTHLIPRSAVLAVAGPVNGDEIDLTNSNWVVRPREMMAHLGFSDIVVLNDFEAQALAVVALGEEHLEKIGGNVAETVGSRVVLGPGTGLGVAGLVHARRTWIPVPGEGGHMDLGPRTARDEQIFPHLERIEGRVSGEQVLCGRGLVNLYRAIAKADAKEAAFSSPAEITTAGLAQADEIAVETLNLFVTYLGRVAGDLGLVFMSRGGVFLTGGIAQKIVPALKNSLFRAAFEDKAPHNELMASMPVYVITHPLAALHGLAAYARTPARFGVETAGRRWRLR</sequence>